<name>ZSC23_HUMAN</name>
<comment type="function">
    <text>May be involved in transcriptional regulation.</text>
</comment>
<comment type="interaction">
    <interactant intactId="EBI-5667532">
        <id>Q3MJ62</id>
    </interactant>
    <interactant intactId="EBI-11975051">
        <id>Q8TD16-2</id>
        <label>BICD2</label>
    </interactant>
    <organismsDiffer>false</organismsDiffer>
    <experiments>3</experiments>
</comment>
<comment type="interaction">
    <interactant intactId="EBI-5667532">
        <id>Q3MJ62</id>
    </interactant>
    <interactant intactId="EBI-11063830">
        <id>Q86X02</id>
        <label>CDR2L</label>
    </interactant>
    <organismsDiffer>false</organismsDiffer>
    <experiments>3</experiments>
</comment>
<comment type="interaction">
    <interactant intactId="EBI-5667532">
        <id>Q3MJ62</id>
    </interactant>
    <interactant intactId="EBI-739624">
        <id>Q8NHQ1</id>
        <label>CEP70</label>
    </interactant>
    <organismsDiffer>false</organismsDiffer>
    <experiments>3</experiments>
</comment>
<comment type="interaction">
    <interactant intactId="EBI-5667532">
        <id>Q3MJ62</id>
    </interactant>
    <interactant intactId="EBI-742054">
        <id>Q96D03</id>
        <label>DDIT4L</label>
    </interactant>
    <organismsDiffer>false</organismsDiffer>
    <experiments>3</experiments>
</comment>
<comment type="interaction">
    <interactant intactId="EBI-5667532">
        <id>Q3MJ62</id>
    </interactant>
    <interactant intactId="EBI-5916454">
        <id>A6NEM1</id>
        <label>GOLGA6L9</label>
    </interactant>
    <organismsDiffer>false</organismsDiffer>
    <experiments>3</experiments>
</comment>
<comment type="interaction">
    <interactant intactId="EBI-5667532">
        <id>Q3MJ62</id>
    </interactant>
    <interactant intactId="EBI-1059330">
        <id>Q9H008</id>
        <label>LHPP</label>
    </interactant>
    <organismsDiffer>false</organismsDiffer>
    <experiments>3</experiments>
</comment>
<comment type="interaction">
    <interactant intactId="EBI-5667532">
        <id>Q3MJ62</id>
    </interactant>
    <interactant intactId="EBI-12012016">
        <id>Q9Y5F1</id>
        <label>PCDHB12</label>
    </interactant>
    <organismsDiffer>false</organismsDiffer>
    <experiments>3</experiments>
</comment>
<comment type="interaction">
    <interactant intactId="EBI-5667532">
        <id>Q3MJ62</id>
    </interactant>
    <interactant intactId="EBI-79165">
        <id>Q9NRD5</id>
        <label>PICK1</label>
    </interactant>
    <organismsDiffer>false</organismsDiffer>
    <experiments>3</experiments>
</comment>
<comment type="interaction">
    <interactant intactId="EBI-5667532">
        <id>Q3MJ62</id>
    </interactant>
    <interactant intactId="EBI-1383852">
        <id>P54646</id>
        <label>PRKAA2</label>
    </interactant>
    <organismsDiffer>false</organismsDiffer>
    <experiments>3</experiments>
</comment>
<comment type="interaction">
    <interactant intactId="EBI-5667532">
        <id>Q3MJ62</id>
    </interactant>
    <interactant intactId="EBI-745846">
        <id>P57086</id>
        <label>SCAND1</label>
    </interactant>
    <organismsDiffer>false</organismsDiffer>
    <experiments>10</experiments>
</comment>
<comment type="interaction">
    <interactant intactId="EBI-5667532">
        <id>Q3MJ62</id>
    </interactant>
    <interactant intactId="EBI-727004">
        <id>O00560</id>
        <label>SDCBP</label>
    </interactant>
    <organismsDiffer>false</organismsDiffer>
    <experiments>3</experiments>
</comment>
<comment type="interaction">
    <interactant intactId="EBI-5667532">
        <id>Q3MJ62</id>
    </interactant>
    <interactant intactId="EBI-355744">
        <id>Q12933</id>
        <label>TRAF2</label>
    </interactant>
    <organismsDiffer>false</organismsDiffer>
    <experiments>6</experiments>
</comment>
<comment type="interaction">
    <interactant intactId="EBI-5667532">
        <id>Q3MJ62</id>
    </interactant>
    <interactant intactId="EBI-716093">
        <id>P13994</id>
        <label>YJU2B</label>
    </interactant>
    <organismsDiffer>false</organismsDiffer>
    <experiments>5</experiments>
</comment>
<comment type="interaction">
    <interactant intactId="EBI-5667532">
        <id>Q3MJ62</id>
    </interactant>
    <interactant intactId="EBI-10698225">
        <id>Q9P0L1-2</id>
        <label>ZKSCAN7</label>
    </interactant>
    <organismsDiffer>false</organismsDiffer>
    <experiments>3</experiments>
</comment>
<comment type="interaction">
    <interactant intactId="EBI-5667532">
        <id>Q3MJ62</id>
    </interactant>
    <interactant intactId="EBI-707773">
        <id>P17028</id>
        <label>ZNF24</label>
    </interactant>
    <organismsDiffer>false</organismsDiffer>
    <experiments>4</experiments>
</comment>
<comment type="interaction">
    <interactant intactId="EBI-5667532">
        <id>Q3MJ62</id>
    </interactant>
    <interactant intactId="EBI-743265">
        <id>Q9BUY5</id>
        <label>ZNF426</label>
    </interactant>
    <organismsDiffer>false</organismsDiffer>
    <experiments>3</experiments>
</comment>
<comment type="interaction">
    <interactant intactId="EBI-5667532">
        <id>Q3MJ62</id>
    </interactant>
    <interactant intactId="EBI-740232">
        <id>Q9NWS9-2</id>
        <label>ZNF446</label>
    </interactant>
    <organismsDiffer>false</organismsDiffer>
    <experiments>5</experiments>
</comment>
<comment type="interaction">
    <interactant intactId="EBI-5667532">
        <id>Q3MJ62</id>
    </interactant>
    <interactant intactId="EBI-10281938">
        <id>Q9Y5A6</id>
        <label>ZSCAN21</label>
    </interactant>
    <organismsDiffer>false</organismsDiffer>
    <experiments>4</experiments>
</comment>
<comment type="interaction">
    <interactant intactId="EBI-5667532">
        <id>Q3MJ62</id>
    </interactant>
    <interactant intactId="EBI-10178224">
        <id>P10073</id>
        <label>ZSCAN22</label>
    </interactant>
    <organismsDiffer>false</organismsDiffer>
    <experiments>3</experiments>
</comment>
<comment type="interaction">
    <interactant intactId="EBI-5667532">
        <id>Q3MJ62</id>
    </interactant>
    <interactant intactId="EBI-751531">
        <id>O15535</id>
        <label>ZSCAN9</label>
    </interactant>
    <organismsDiffer>false</organismsDiffer>
    <experiments>3</experiments>
</comment>
<comment type="subcellular location">
    <subcellularLocation>
        <location evidence="2">Nucleus</location>
    </subcellularLocation>
</comment>
<comment type="similarity">
    <text evidence="3">Belongs to the krueppel C2H2-type zinc-finger protein family.</text>
</comment>
<sequence length="389" mass="44955">MAITLTLQTAEMQEGLLAVKVKEEEEEHSCGPESGLSRNNPHTREIFRRRFRQFCYQESPGPREALQRLQELCHQWLRPEMHTKEQILELLVLEQFLTILPEELQAWVRQHRPVSGEEAVTVLEDLERELDDPGEQVLSHAHEQEEFVKEKATPGAAQESSNDQFQTLEEQLGYNLREVCPVQEIDGKAGTWNVELAPKREISQEVKSLIQVLGKQNGNITQIPEYGDTCDREGRLEKQRVSSSVERPYICSECGKSFTQNSILIEHQRTHTGEKPYECDECGRAFSQRSGLFQHQRLHTGEKRYQCSVCGKAFSQNAGLFHHLRIHTGEKPYQCNQCNKSFSRRSVLIKHQRIHTGERPYECEECGKNFIYHCNLIQHRKVHPVAESS</sequence>
<accession>Q3MJ62</accession>
<accession>Q96KV9</accession>
<feature type="chain" id="PRO_0000280411" description="Zinc finger and SCAN domain-containing protein 23">
    <location>
        <begin position="1"/>
        <end position="389"/>
    </location>
</feature>
<feature type="domain" description="SCAN box" evidence="2">
    <location>
        <begin position="48"/>
        <end position="130"/>
    </location>
</feature>
<feature type="zinc finger region" description="C2H2-type 1" evidence="1">
    <location>
        <begin position="249"/>
        <end position="271"/>
    </location>
</feature>
<feature type="zinc finger region" description="C2H2-type 2" evidence="1">
    <location>
        <begin position="277"/>
        <end position="299"/>
    </location>
</feature>
<feature type="zinc finger region" description="C2H2-type 3" evidence="1">
    <location>
        <begin position="305"/>
        <end position="327"/>
    </location>
</feature>
<feature type="zinc finger region" description="C2H2-type 4" evidence="1">
    <location>
        <begin position="333"/>
        <end position="355"/>
    </location>
</feature>
<feature type="zinc finger region" description="C2H2-type 5" evidence="1">
    <location>
        <begin position="361"/>
        <end position="383"/>
    </location>
</feature>
<dbReference type="EMBL" id="Z98745">
    <property type="status" value="NOT_ANNOTATED_CDS"/>
    <property type="molecule type" value="Genomic_DNA"/>
</dbReference>
<dbReference type="EMBL" id="BC101559">
    <property type="protein sequence ID" value="AAI01560.1"/>
    <property type="molecule type" value="mRNA"/>
</dbReference>
<dbReference type="EMBL" id="BC101557">
    <property type="protein sequence ID" value="AAI01558.1"/>
    <property type="molecule type" value="mRNA"/>
</dbReference>
<dbReference type="CCDS" id="CCDS47393.1"/>
<dbReference type="RefSeq" id="NP_001012458.1">
    <property type="nucleotide sequence ID" value="NM_001012455.2"/>
</dbReference>
<dbReference type="RefSeq" id="XP_005249007.1">
    <property type="nucleotide sequence ID" value="XM_005248950.2"/>
</dbReference>
<dbReference type="RefSeq" id="XP_011512708.1">
    <property type="nucleotide sequence ID" value="XM_011514406.2"/>
</dbReference>
<dbReference type="RefSeq" id="XP_011512710.1">
    <property type="nucleotide sequence ID" value="XM_011514408.2"/>
</dbReference>
<dbReference type="RefSeq" id="XP_011512712.1">
    <property type="nucleotide sequence ID" value="XM_011514410.2"/>
</dbReference>
<dbReference type="RefSeq" id="XP_016865968.1">
    <property type="nucleotide sequence ID" value="XM_017010479.1"/>
</dbReference>
<dbReference type="RefSeq" id="XP_047274340.1">
    <property type="nucleotide sequence ID" value="XM_047418384.1"/>
</dbReference>
<dbReference type="RefSeq" id="XP_054210642.1">
    <property type="nucleotide sequence ID" value="XM_054354667.1"/>
</dbReference>
<dbReference type="SMR" id="Q3MJ62"/>
<dbReference type="BioGRID" id="128813">
    <property type="interactions" value="39"/>
</dbReference>
<dbReference type="FunCoup" id="Q3MJ62">
    <property type="interactions" value="63"/>
</dbReference>
<dbReference type="IntAct" id="Q3MJ62">
    <property type="interactions" value="37"/>
</dbReference>
<dbReference type="STRING" id="9606.ENSP00000289788"/>
<dbReference type="iPTMnet" id="Q3MJ62"/>
<dbReference type="PhosphoSitePlus" id="Q3MJ62"/>
<dbReference type="BioMuta" id="ZSCAN23"/>
<dbReference type="DMDM" id="121949042"/>
<dbReference type="jPOST" id="Q3MJ62"/>
<dbReference type="MassIVE" id="Q3MJ62"/>
<dbReference type="PaxDb" id="9606-ENSP00000289788"/>
<dbReference type="PeptideAtlas" id="Q3MJ62"/>
<dbReference type="ProteomicsDB" id="61805"/>
<dbReference type="ABCD" id="Q3MJ62">
    <property type="antibodies" value="3 sequenced antibodies"/>
</dbReference>
<dbReference type="Antibodypedia" id="50066">
    <property type="antibodies" value="74 antibodies from 13 providers"/>
</dbReference>
<dbReference type="DNASU" id="222696"/>
<dbReference type="Ensembl" id="ENST00000289788.5">
    <property type="protein sequence ID" value="ENSP00000289788.4"/>
    <property type="gene ID" value="ENSG00000187987.10"/>
</dbReference>
<dbReference type="GeneID" id="222696"/>
<dbReference type="KEGG" id="hsa:222696"/>
<dbReference type="MANE-Select" id="ENST00000289788.5">
    <property type="protein sequence ID" value="ENSP00000289788.4"/>
    <property type="RefSeq nucleotide sequence ID" value="NM_001012455.2"/>
    <property type="RefSeq protein sequence ID" value="NP_001012458.1"/>
</dbReference>
<dbReference type="UCSC" id="uc003nli.5">
    <property type="organism name" value="human"/>
</dbReference>
<dbReference type="AGR" id="HGNC:21193"/>
<dbReference type="CTD" id="222696"/>
<dbReference type="DisGeNET" id="222696"/>
<dbReference type="GeneCards" id="ZSCAN23"/>
<dbReference type="HGNC" id="HGNC:21193">
    <property type="gene designation" value="ZSCAN23"/>
</dbReference>
<dbReference type="HPA" id="ENSG00000187987">
    <property type="expression patterns" value="Low tissue specificity"/>
</dbReference>
<dbReference type="neXtProt" id="NX_Q3MJ62"/>
<dbReference type="OpenTargets" id="ENSG00000187987"/>
<dbReference type="PharmGKB" id="PA162410995"/>
<dbReference type="VEuPathDB" id="HostDB:ENSG00000187987"/>
<dbReference type="eggNOG" id="KOG1721">
    <property type="taxonomic scope" value="Eukaryota"/>
</dbReference>
<dbReference type="GeneTree" id="ENSGT00940000162869"/>
<dbReference type="HOGENOM" id="CLU_002678_49_3_1"/>
<dbReference type="InParanoid" id="Q3MJ62"/>
<dbReference type="OMA" id="EAGTWNV"/>
<dbReference type="OrthoDB" id="654211at2759"/>
<dbReference type="PAN-GO" id="Q3MJ62">
    <property type="GO annotations" value="3 GO annotations based on evolutionary models"/>
</dbReference>
<dbReference type="PhylomeDB" id="Q3MJ62"/>
<dbReference type="TreeFam" id="TF338304"/>
<dbReference type="PathwayCommons" id="Q3MJ62"/>
<dbReference type="SignaLink" id="Q3MJ62"/>
<dbReference type="BioGRID-ORCS" id="222696">
    <property type="hits" value="13 hits in 1170 CRISPR screens"/>
</dbReference>
<dbReference type="ChiTaRS" id="ZSCAN23">
    <property type="organism name" value="human"/>
</dbReference>
<dbReference type="GenomeRNAi" id="222696"/>
<dbReference type="Pharos" id="Q3MJ62">
    <property type="development level" value="Tdark"/>
</dbReference>
<dbReference type="PRO" id="PR:Q3MJ62"/>
<dbReference type="Proteomes" id="UP000005640">
    <property type="component" value="Chromosome 6"/>
</dbReference>
<dbReference type="RNAct" id="Q3MJ62">
    <property type="molecule type" value="protein"/>
</dbReference>
<dbReference type="Bgee" id="ENSG00000187987">
    <property type="expression patterns" value="Expressed in ventricular zone and 103 other cell types or tissues"/>
</dbReference>
<dbReference type="ExpressionAtlas" id="Q3MJ62">
    <property type="expression patterns" value="baseline and differential"/>
</dbReference>
<dbReference type="GO" id="GO:0005634">
    <property type="term" value="C:nucleus"/>
    <property type="evidence" value="ECO:0007669"/>
    <property type="project" value="UniProtKB-SubCell"/>
</dbReference>
<dbReference type="GO" id="GO:0000981">
    <property type="term" value="F:DNA-binding transcription factor activity, RNA polymerase II-specific"/>
    <property type="evidence" value="ECO:0000318"/>
    <property type="project" value="GO_Central"/>
</dbReference>
<dbReference type="GO" id="GO:0000978">
    <property type="term" value="F:RNA polymerase II cis-regulatory region sequence-specific DNA binding"/>
    <property type="evidence" value="ECO:0000318"/>
    <property type="project" value="GO_Central"/>
</dbReference>
<dbReference type="GO" id="GO:1990837">
    <property type="term" value="F:sequence-specific double-stranded DNA binding"/>
    <property type="evidence" value="ECO:0000314"/>
    <property type="project" value="ARUK-UCL"/>
</dbReference>
<dbReference type="GO" id="GO:0008270">
    <property type="term" value="F:zinc ion binding"/>
    <property type="evidence" value="ECO:0007669"/>
    <property type="project" value="UniProtKB-KW"/>
</dbReference>
<dbReference type="GO" id="GO:0006357">
    <property type="term" value="P:regulation of transcription by RNA polymerase II"/>
    <property type="evidence" value="ECO:0000318"/>
    <property type="project" value="GO_Central"/>
</dbReference>
<dbReference type="CDD" id="cd07936">
    <property type="entry name" value="SCAN"/>
    <property type="match status" value="1"/>
</dbReference>
<dbReference type="FunFam" id="3.30.160.60:FF:001320">
    <property type="entry name" value="Zinc finger and SCAN domain containing 9"/>
    <property type="match status" value="1"/>
</dbReference>
<dbReference type="FunFam" id="3.30.160.60:FF:001087">
    <property type="entry name" value="Zinc finger and SCAN domain-containing protein 26"/>
    <property type="match status" value="1"/>
</dbReference>
<dbReference type="FunFam" id="3.30.160.60:FF:000478">
    <property type="entry name" value="Zinc finger protein 133"/>
    <property type="match status" value="1"/>
</dbReference>
<dbReference type="FunFam" id="3.30.160.60:FF:000944">
    <property type="entry name" value="zinc finger protein 232 isoform X1"/>
    <property type="match status" value="1"/>
</dbReference>
<dbReference type="FunFam" id="1.10.4020.10:FF:000001">
    <property type="entry name" value="zinc finger protein 263 isoform X1"/>
    <property type="match status" value="1"/>
</dbReference>
<dbReference type="FunFam" id="3.30.160.60:FF:002254">
    <property type="entry name" value="Zinc finger protein 540"/>
    <property type="match status" value="1"/>
</dbReference>
<dbReference type="Gene3D" id="3.30.160.60">
    <property type="entry name" value="Classic Zinc Finger"/>
    <property type="match status" value="5"/>
</dbReference>
<dbReference type="Gene3D" id="1.10.4020.10">
    <property type="entry name" value="DNA breaking-rejoining enzymes"/>
    <property type="match status" value="1"/>
</dbReference>
<dbReference type="InterPro" id="IPR003309">
    <property type="entry name" value="SCAN_dom"/>
</dbReference>
<dbReference type="InterPro" id="IPR038269">
    <property type="entry name" value="SCAN_sf"/>
</dbReference>
<dbReference type="InterPro" id="IPR036236">
    <property type="entry name" value="Znf_C2H2_sf"/>
</dbReference>
<dbReference type="InterPro" id="IPR013087">
    <property type="entry name" value="Znf_C2H2_type"/>
</dbReference>
<dbReference type="PANTHER" id="PTHR23226">
    <property type="entry name" value="ZINC FINGER AND SCAN DOMAIN-CONTAINING"/>
    <property type="match status" value="1"/>
</dbReference>
<dbReference type="PANTHER" id="PTHR23226:SF76">
    <property type="entry name" value="ZINC FINGER AND SCAN DOMAIN-CONTAINING PROTEIN 23"/>
    <property type="match status" value="1"/>
</dbReference>
<dbReference type="Pfam" id="PF02023">
    <property type="entry name" value="SCAN"/>
    <property type="match status" value="1"/>
</dbReference>
<dbReference type="Pfam" id="PF00096">
    <property type="entry name" value="zf-C2H2"/>
    <property type="match status" value="5"/>
</dbReference>
<dbReference type="SMART" id="SM00431">
    <property type="entry name" value="SCAN"/>
    <property type="match status" value="1"/>
</dbReference>
<dbReference type="SMART" id="SM00355">
    <property type="entry name" value="ZnF_C2H2"/>
    <property type="match status" value="5"/>
</dbReference>
<dbReference type="SUPFAM" id="SSF57667">
    <property type="entry name" value="beta-beta-alpha zinc fingers"/>
    <property type="match status" value="3"/>
</dbReference>
<dbReference type="SUPFAM" id="SSF47353">
    <property type="entry name" value="Retrovirus capsid dimerization domain-like"/>
    <property type="match status" value="1"/>
</dbReference>
<dbReference type="PROSITE" id="PS50804">
    <property type="entry name" value="SCAN_BOX"/>
    <property type="match status" value="1"/>
</dbReference>
<dbReference type="PROSITE" id="PS00028">
    <property type="entry name" value="ZINC_FINGER_C2H2_1"/>
    <property type="match status" value="5"/>
</dbReference>
<dbReference type="PROSITE" id="PS50157">
    <property type="entry name" value="ZINC_FINGER_C2H2_2"/>
    <property type="match status" value="5"/>
</dbReference>
<protein>
    <recommendedName>
        <fullName>Zinc finger and SCAN domain-containing protein 23</fullName>
    </recommendedName>
    <alternativeName>
        <fullName>Zinc finger protein 390</fullName>
    </alternativeName>
    <alternativeName>
        <fullName>Zinc finger protein 453</fullName>
    </alternativeName>
</protein>
<evidence type="ECO:0000255" key="1">
    <source>
        <dbReference type="PROSITE-ProRule" id="PRU00042"/>
    </source>
</evidence>
<evidence type="ECO:0000255" key="2">
    <source>
        <dbReference type="PROSITE-ProRule" id="PRU00187"/>
    </source>
</evidence>
<evidence type="ECO:0000305" key="3"/>
<reference key="1">
    <citation type="journal article" date="2003" name="Nature">
        <title>The DNA sequence and analysis of human chromosome 6.</title>
        <authorList>
            <person name="Mungall A.J."/>
            <person name="Palmer S.A."/>
            <person name="Sims S.K."/>
            <person name="Edwards C.A."/>
            <person name="Ashurst J.L."/>
            <person name="Wilming L."/>
            <person name="Jones M.C."/>
            <person name="Horton R."/>
            <person name="Hunt S.E."/>
            <person name="Scott C.E."/>
            <person name="Gilbert J.G.R."/>
            <person name="Clamp M.E."/>
            <person name="Bethel G."/>
            <person name="Milne S."/>
            <person name="Ainscough R."/>
            <person name="Almeida J.P."/>
            <person name="Ambrose K.D."/>
            <person name="Andrews T.D."/>
            <person name="Ashwell R.I.S."/>
            <person name="Babbage A.K."/>
            <person name="Bagguley C.L."/>
            <person name="Bailey J."/>
            <person name="Banerjee R."/>
            <person name="Barker D.J."/>
            <person name="Barlow K.F."/>
            <person name="Bates K."/>
            <person name="Beare D.M."/>
            <person name="Beasley H."/>
            <person name="Beasley O."/>
            <person name="Bird C.P."/>
            <person name="Blakey S.E."/>
            <person name="Bray-Allen S."/>
            <person name="Brook J."/>
            <person name="Brown A.J."/>
            <person name="Brown J.Y."/>
            <person name="Burford D.C."/>
            <person name="Burrill W."/>
            <person name="Burton J."/>
            <person name="Carder C."/>
            <person name="Carter N.P."/>
            <person name="Chapman J.C."/>
            <person name="Clark S.Y."/>
            <person name="Clark G."/>
            <person name="Clee C.M."/>
            <person name="Clegg S."/>
            <person name="Cobley V."/>
            <person name="Collier R.E."/>
            <person name="Collins J.E."/>
            <person name="Colman L.K."/>
            <person name="Corby N.R."/>
            <person name="Coville G.J."/>
            <person name="Culley K.M."/>
            <person name="Dhami P."/>
            <person name="Davies J."/>
            <person name="Dunn M."/>
            <person name="Earthrowl M.E."/>
            <person name="Ellington A.E."/>
            <person name="Evans K.A."/>
            <person name="Faulkner L."/>
            <person name="Francis M.D."/>
            <person name="Frankish A."/>
            <person name="Frankland J."/>
            <person name="French L."/>
            <person name="Garner P."/>
            <person name="Garnett J."/>
            <person name="Ghori M.J."/>
            <person name="Gilby L.M."/>
            <person name="Gillson C.J."/>
            <person name="Glithero R.J."/>
            <person name="Grafham D.V."/>
            <person name="Grant M."/>
            <person name="Gribble S."/>
            <person name="Griffiths C."/>
            <person name="Griffiths M.N.D."/>
            <person name="Hall R."/>
            <person name="Halls K.S."/>
            <person name="Hammond S."/>
            <person name="Harley J.L."/>
            <person name="Hart E.A."/>
            <person name="Heath P.D."/>
            <person name="Heathcott R."/>
            <person name="Holmes S.J."/>
            <person name="Howden P.J."/>
            <person name="Howe K.L."/>
            <person name="Howell G.R."/>
            <person name="Huckle E."/>
            <person name="Humphray S.J."/>
            <person name="Humphries M.D."/>
            <person name="Hunt A.R."/>
            <person name="Johnson C.M."/>
            <person name="Joy A.A."/>
            <person name="Kay M."/>
            <person name="Keenan S.J."/>
            <person name="Kimberley A.M."/>
            <person name="King A."/>
            <person name="Laird G.K."/>
            <person name="Langford C."/>
            <person name="Lawlor S."/>
            <person name="Leongamornlert D.A."/>
            <person name="Leversha M."/>
            <person name="Lloyd C.R."/>
            <person name="Lloyd D.M."/>
            <person name="Loveland J.E."/>
            <person name="Lovell J."/>
            <person name="Martin S."/>
            <person name="Mashreghi-Mohammadi M."/>
            <person name="Maslen G.L."/>
            <person name="Matthews L."/>
            <person name="McCann O.T."/>
            <person name="McLaren S.J."/>
            <person name="McLay K."/>
            <person name="McMurray A."/>
            <person name="Moore M.J.F."/>
            <person name="Mullikin J.C."/>
            <person name="Niblett D."/>
            <person name="Nickerson T."/>
            <person name="Novik K.L."/>
            <person name="Oliver K."/>
            <person name="Overton-Larty E.K."/>
            <person name="Parker A."/>
            <person name="Patel R."/>
            <person name="Pearce A.V."/>
            <person name="Peck A.I."/>
            <person name="Phillimore B.J.C.T."/>
            <person name="Phillips S."/>
            <person name="Plumb R.W."/>
            <person name="Porter K.M."/>
            <person name="Ramsey Y."/>
            <person name="Ranby S.A."/>
            <person name="Rice C.M."/>
            <person name="Ross M.T."/>
            <person name="Searle S.M."/>
            <person name="Sehra H.K."/>
            <person name="Sheridan E."/>
            <person name="Skuce C.D."/>
            <person name="Smith S."/>
            <person name="Smith M."/>
            <person name="Spraggon L."/>
            <person name="Squares S.L."/>
            <person name="Steward C.A."/>
            <person name="Sycamore N."/>
            <person name="Tamlyn-Hall G."/>
            <person name="Tester J."/>
            <person name="Theaker A.J."/>
            <person name="Thomas D.W."/>
            <person name="Thorpe A."/>
            <person name="Tracey A."/>
            <person name="Tromans A."/>
            <person name="Tubby B."/>
            <person name="Wall M."/>
            <person name="Wallis J.M."/>
            <person name="West A.P."/>
            <person name="White S.S."/>
            <person name="Whitehead S.L."/>
            <person name="Whittaker H."/>
            <person name="Wild A."/>
            <person name="Willey D.J."/>
            <person name="Wilmer T.E."/>
            <person name="Wood J.M."/>
            <person name="Wray P.W."/>
            <person name="Wyatt J.C."/>
            <person name="Young L."/>
            <person name="Younger R.M."/>
            <person name="Bentley D.R."/>
            <person name="Coulson A."/>
            <person name="Durbin R.M."/>
            <person name="Hubbard T."/>
            <person name="Sulston J.E."/>
            <person name="Dunham I."/>
            <person name="Rogers J."/>
            <person name="Beck S."/>
        </authorList>
    </citation>
    <scope>NUCLEOTIDE SEQUENCE [LARGE SCALE GENOMIC DNA]</scope>
</reference>
<reference key="2">
    <citation type="journal article" date="2004" name="Genome Res.">
        <title>The status, quality, and expansion of the NIH full-length cDNA project: the Mammalian Gene Collection (MGC).</title>
        <authorList>
            <consortium name="The MGC Project Team"/>
        </authorList>
    </citation>
    <scope>NUCLEOTIDE SEQUENCE [LARGE SCALE MRNA]</scope>
    <source>
        <tissue>Placenta</tissue>
    </source>
</reference>
<keyword id="KW-0238">DNA-binding</keyword>
<keyword id="KW-0479">Metal-binding</keyword>
<keyword id="KW-0539">Nucleus</keyword>
<keyword id="KW-1267">Proteomics identification</keyword>
<keyword id="KW-1185">Reference proteome</keyword>
<keyword id="KW-0677">Repeat</keyword>
<keyword id="KW-0804">Transcription</keyword>
<keyword id="KW-0805">Transcription regulation</keyword>
<keyword id="KW-0862">Zinc</keyword>
<keyword id="KW-0863">Zinc-finger</keyword>
<proteinExistence type="evidence at protein level"/>
<organism>
    <name type="scientific">Homo sapiens</name>
    <name type="common">Human</name>
    <dbReference type="NCBI Taxonomy" id="9606"/>
    <lineage>
        <taxon>Eukaryota</taxon>
        <taxon>Metazoa</taxon>
        <taxon>Chordata</taxon>
        <taxon>Craniata</taxon>
        <taxon>Vertebrata</taxon>
        <taxon>Euteleostomi</taxon>
        <taxon>Mammalia</taxon>
        <taxon>Eutheria</taxon>
        <taxon>Euarchontoglires</taxon>
        <taxon>Primates</taxon>
        <taxon>Haplorrhini</taxon>
        <taxon>Catarrhini</taxon>
        <taxon>Hominidae</taxon>
        <taxon>Homo</taxon>
    </lineage>
</organism>
<gene>
    <name type="primary">ZSCAN23</name>
    <name type="synonym">ZNF390</name>
    <name type="synonym">ZNF453</name>
</gene>